<name>ATPB_FRATN</name>
<sequence>MSTGKIIQVIGAVIDVEFARDNTPKVYDALNVVEAGLVLEVQQQIGDGVVRTIAMGSSDGLRRGMEVKNTNAPISVPVGHGTLGRIMNVLGEPIDEAGPIEYTEKRSIHQAPPAYDELALSTEILETGIKVVDLICPFAKGGKVGLFGGAGVGKTVTMMELINNIAKEHSGYSVFAGVGERTREGNDFYYEMKDSNVLDKVSLVYGQMNEPPGNRLRVALSGLTIAEGFRDEKRDVLMFIDNIYRYTLAGTEVSALLGRMPSAVGYQPTLAAEMGALQERITSTKTGSITSVQAVYVPADDLTDPSPATTFSHLDATIVLSRQIAELGIYPAVDPLDSTSRQLDPLVVGQEHYETARAVQKVLQRYKELKDIIAILGMDELSDEDKKIVDRARKIQRFLSQPFHVAEVFTGNPGKFVSLKDTVASFKAIVNGEYDHLPEQAFYMVGSIQEAIEKAKTL</sequence>
<gene>
    <name evidence="1" type="primary">atpD</name>
    <name type="ordered locus">FTN_1646</name>
</gene>
<proteinExistence type="inferred from homology"/>
<dbReference type="EC" id="7.1.2.2" evidence="1"/>
<dbReference type="EMBL" id="CP000439">
    <property type="protein sequence ID" value="ABK90504.1"/>
    <property type="molecule type" value="Genomic_DNA"/>
</dbReference>
<dbReference type="RefSeq" id="WP_003035141.1">
    <property type="nucleotide sequence ID" value="NZ_CP009633.1"/>
</dbReference>
<dbReference type="SMR" id="A0Q8D9"/>
<dbReference type="KEGG" id="ftn:FTN_1646"/>
<dbReference type="KEGG" id="ftx:AW25_342"/>
<dbReference type="BioCyc" id="FTUL401614:G1G75-1707-MONOMER"/>
<dbReference type="Proteomes" id="UP000000762">
    <property type="component" value="Chromosome"/>
</dbReference>
<dbReference type="GO" id="GO:0005886">
    <property type="term" value="C:plasma membrane"/>
    <property type="evidence" value="ECO:0007669"/>
    <property type="project" value="UniProtKB-SubCell"/>
</dbReference>
<dbReference type="GO" id="GO:0045259">
    <property type="term" value="C:proton-transporting ATP synthase complex"/>
    <property type="evidence" value="ECO:0007669"/>
    <property type="project" value="UniProtKB-KW"/>
</dbReference>
<dbReference type="GO" id="GO:0005524">
    <property type="term" value="F:ATP binding"/>
    <property type="evidence" value="ECO:0007669"/>
    <property type="project" value="UniProtKB-UniRule"/>
</dbReference>
<dbReference type="GO" id="GO:0016887">
    <property type="term" value="F:ATP hydrolysis activity"/>
    <property type="evidence" value="ECO:0007669"/>
    <property type="project" value="InterPro"/>
</dbReference>
<dbReference type="GO" id="GO:0046933">
    <property type="term" value="F:proton-transporting ATP synthase activity, rotational mechanism"/>
    <property type="evidence" value="ECO:0007669"/>
    <property type="project" value="UniProtKB-UniRule"/>
</dbReference>
<dbReference type="CDD" id="cd18110">
    <property type="entry name" value="ATP-synt_F1_beta_C"/>
    <property type="match status" value="1"/>
</dbReference>
<dbReference type="CDD" id="cd18115">
    <property type="entry name" value="ATP-synt_F1_beta_N"/>
    <property type="match status" value="1"/>
</dbReference>
<dbReference type="CDD" id="cd01133">
    <property type="entry name" value="F1-ATPase_beta_CD"/>
    <property type="match status" value="1"/>
</dbReference>
<dbReference type="FunFam" id="1.10.1140.10:FF:000001">
    <property type="entry name" value="ATP synthase subunit beta"/>
    <property type="match status" value="1"/>
</dbReference>
<dbReference type="FunFam" id="2.40.10.170:FF:000003">
    <property type="entry name" value="ATP synthase subunit beta"/>
    <property type="match status" value="1"/>
</dbReference>
<dbReference type="FunFam" id="3.40.50.300:FF:000004">
    <property type="entry name" value="ATP synthase subunit beta"/>
    <property type="match status" value="1"/>
</dbReference>
<dbReference type="Gene3D" id="2.40.10.170">
    <property type="match status" value="1"/>
</dbReference>
<dbReference type="Gene3D" id="1.10.1140.10">
    <property type="entry name" value="Bovine Mitochondrial F1-atpase, Atp Synthase Beta Chain, Chain D, domain 3"/>
    <property type="match status" value="1"/>
</dbReference>
<dbReference type="Gene3D" id="3.40.50.300">
    <property type="entry name" value="P-loop containing nucleotide triphosphate hydrolases"/>
    <property type="match status" value="1"/>
</dbReference>
<dbReference type="HAMAP" id="MF_01347">
    <property type="entry name" value="ATP_synth_beta_bact"/>
    <property type="match status" value="1"/>
</dbReference>
<dbReference type="InterPro" id="IPR003593">
    <property type="entry name" value="AAA+_ATPase"/>
</dbReference>
<dbReference type="InterPro" id="IPR055190">
    <property type="entry name" value="ATP-synt_VA_C"/>
</dbReference>
<dbReference type="InterPro" id="IPR005722">
    <property type="entry name" value="ATP_synth_F1_bsu"/>
</dbReference>
<dbReference type="InterPro" id="IPR020003">
    <property type="entry name" value="ATPase_a/bsu_AS"/>
</dbReference>
<dbReference type="InterPro" id="IPR050053">
    <property type="entry name" value="ATPase_alpha/beta_chains"/>
</dbReference>
<dbReference type="InterPro" id="IPR004100">
    <property type="entry name" value="ATPase_F1/V1/A1_a/bsu_N"/>
</dbReference>
<dbReference type="InterPro" id="IPR036121">
    <property type="entry name" value="ATPase_F1/V1/A1_a/bsu_N_sf"/>
</dbReference>
<dbReference type="InterPro" id="IPR000194">
    <property type="entry name" value="ATPase_F1/V1/A1_a/bsu_nucl-bd"/>
</dbReference>
<dbReference type="InterPro" id="IPR024034">
    <property type="entry name" value="ATPase_F1/V1_b/a_C"/>
</dbReference>
<dbReference type="InterPro" id="IPR027417">
    <property type="entry name" value="P-loop_NTPase"/>
</dbReference>
<dbReference type="NCBIfam" id="TIGR01039">
    <property type="entry name" value="atpD"/>
    <property type="match status" value="1"/>
</dbReference>
<dbReference type="PANTHER" id="PTHR15184">
    <property type="entry name" value="ATP SYNTHASE"/>
    <property type="match status" value="1"/>
</dbReference>
<dbReference type="PANTHER" id="PTHR15184:SF71">
    <property type="entry name" value="ATP SYNTHASE SUBUNIT BETA, MITOCHONDRIAL"/>
    <property type="match status" value="1"/>
</dbReference>
<dbReference type="Pfam" id="PF00006">
    <property type="entry name" value="ATP-synt_ab"/>
    <property type="match status" value="1"/>
</dbReference>
<dbReference type="Pfam" id="PF02874">
    <property type="entry name" value="ATP-synt_ab_N"/>
    <property type="match status" value="1"/>
</dbReference>
<dbReference type="Pfam" id="PF22919">
    <property type="entry name" value="ATP-synt_VA_C"/>
    <property type="match status" value="1"/>
</dbReference>
<dbReference type="SMART" id="SM00382">
    <property type="entry name" value="AAA"/>
    <property type="match status" value="1"/>
</dbReference>
<dbReference type="SUPFAM" id="SSF47917">
    <property type="entry name" value="C-terminal domain of alpha and beta subunits of F1 ATP synthase"/>
    <property type="match status" value="1"/>
</dbReference>
<dbReference type="SUPFAM" id="SSF50615">
    <property type="entry name" value="N-terminal domain of alpha and beta subunits of F1 ATP synthase"/>
    <property type="match status" value="1"/>
</dbReference>
<dbReference type="SUPFAM" id="SSF52540">
    <property type="entry name" value="P-loop containing nucleoside triphosphate hydrolases"/>
    <property type="match status" value="1"/>
</dbReference>
<dbReference type="PROSITE" id="PS00152">
    <property type="entry name" value="ATPASE_ALPHA_BETA"/>
    <property type="match status" value="1"/>
</dbReference>
<comment type="function">
    <text evidence="1">Produces ATP from ADP in the presence of a proton gradient across the membrane. The catalytic sites are hosted primarily by the beta subunits.</text>
</comment>
<comment type="catalytic activity">
    <reaction evidence="1">
        <text>ATP + H2O + 4 H(+)(in) = ADP + phosphate + 5 H(+)(out)</text>
        <dbReference type="Rhea" id="RHEA:57720"/>
        <dbReference type="ChEBI" id="CHEBI:15377"/>
        <dbReference type="ChEBI" id="CHEBI:15378"/>
        <dbReference type="ChEBI" id="CHEBI:30616"/>
        <dbReference type="ChEBI" id="CHEBI:43474"/>
        <dbReference type="ChEBI" id="CHEBI:456216"/>
        <dbReference type="EC" id="7.1.2.2"/>
    </reaction>
</comment>
<comment type="subunit">
    <text evidence="1">F-type ATPases have 2 components, CF(1) - the catalytic core - and CF(0) - the membrane proton channel. CF(1) has five subunits: alpha(3), beta(3), gamma(1), delta(1), epsilon(1). CF(0) has three main subunits: a(1), b(2) and c(9-12). The alpha and beta chains form an alternating ring which encloses part of the gamma chain. CF(1) is attached to CF(0) by a central stalk formed by the gamma and epsilon chains, while a peripheral stalk is formed by the delta and b chains.</text>
</comment>
<comment type="subcellular location">
    <subcellularLocation>
        <location evidence="1">Cell inner membrane</location>
        <topology evidence="1">Peripheral membrane protein</topology>
    </subcellularLocation>
</comment>
<comment type="similarity">
    <text evidence="1">Belongs to the ATPase alpha/beta chains family.</text>
</comment>
<evidence type="ECO:0000255" key="1">
    <source>
        <dbReference type="HAMAP-Rule" id="MF_01347"/>
    </source>
</evidence>
<organism>
    <name type="scientific">Francisella tularensis subsp. novicida (strain U112)</name>
    <dbReference type="NCBI Taxonomy" id="401614"/>
    <lineage>
        <taxon>Bacteria</taxon>
        <taxon>Pseudomonadati</taxon>
        <taxon>Pseudomonadota</taxon>
        <taxon>Gammaproteobacteria</taxon>
        <taxon>Thiotrichales</taxon>
        <taxon>Francisellaceae</taxon>
        <taxon>Francisella</taxon>
    </lineage>
</organism>
<feature type="chain" id="PRO_1000055113" description="ATP synthase subunit beta">
    <location>
        <begin position="1"/>
        <end position="458"/>
    </location>
</feature>
<feature type="binding site" evidence="1">
    <location>
        <begin position="148"/>
        <end position="155"/>
    </location>
    <ligand>
        <name>ATP</name>
        <dbReference type="ChEBI" id="CHEBI:30616"/>
    </ligand>
</feature>
<protein>
    <recommendedName>
        <fullName evidence="1">ATP synthase subunit beta</fullName>
        <ecNumber evidence="1">7.1.2.2</ecNumber>
    </recommendedName>
    <alternativeName>
        <fullName evidence="1">ATP synthase F1 sector subunit beta</fullName>
    </alternativeName>
    <alternativeName>
        <fullName evidence="1">F-ATPase subunit beta</fullName>
    </alternativeName>
</protein>
<reference key="1">
    <citation type="journal article" date="2007" name="Genome Biol.">
        <title>Comparison of Francisella tularensis genomes reveals evolutionary events associated with the emergence of human pathogenic strains.</title>
        <authorList>
            <person name="Rohmer L."/>
            <person name="Fong C."/>
            <person name="Abmayr S."/>
            <person name="Wasnick M."/>
            <person name="Larson Freeman T.J."/>
            <person name="Radey M."/>
            <person name="Guina T."/>
            <person name="Svensson K."/>
            <person name="Hayden H.S."/>
            <person name="Jacobs M."/>
            <person name="Gallagher L.A."/>
            <person name="Manoil C."/>
            <person name="Ernst R.K."/>
            <person name="Drees B."/>
            <person name="Buckley D."/>
            <person name="Haugen E."/>
            <person name="Bovee D."/>
            <person name="Zhou Y."/>
            <person name="Chang J."/>
            <person name="Levy R."/>
            <person name="Lim R."/>
            <person name="Gillett W."/>
            <person name="Guenthener D."/>
            <person name="Kang A."/>
            <person name="Shaffer S.A."/>
            <person name="Taylor G."/>
            <person name="Chen J."/>
            <person name="Gallis B."/>
            <person name="D'Argenio D.A."/>
            <person name="Forsman M."/>
            <person name="Olson M.V."/>
            <person name="Goodlett D.R."/>
            <person name="Kaul R."/>
            <person name="Miller S.I."/>
            <person name="Brittnacher M.J."/>
        </authorList>
    </citation>
    <scope>NUCLEOTIDE SEQUENCE [LARGE SCALE GENOMIC DNA]</scope>
    <source>
        <strain>U112</strain>
    </source>
</reference>
<keyword id="KW-0066">ATP synthesis</keyword>
<keyword id="KW-0067">ATP-binding</keyword>
<keyword id="KW-0997">Cell inner membrane</keyword>
<keyword id="KW-1003">Cell membrane</keyword>
<keyword id="KW-0139">CF(1)</keyword>
<keyword id="KW-0375">Hydrogen ion transport</keyword>
<keyword id="KW-0406">Ion transport</keyword>
<keyword id="KW-0472">Membrane</keyword>
<keyword id="KW-0547">Nucleotide-binding</keyword>
<keyword id="KW-1278">Translocase</keyword>
<keyword id="KW-0813">Transport</keyword>
<accession>A0Q8D9</accession>